<feature type="chain" id="PRO_1000140505" description="Small ribosomal subunit protein uS8">
    <location>
        <begin position="1"/>
        <end position="133"/>
    </location>
</feature>
<keyword id="KW-1185">Reference proteome</keyword>
<keyword id="KW-0687">Ribonucleoprotein</keyword>
<keyword id="KW-0689">Ribosomal protein</keyword>
<keyword id="KW-0694">RNA-binding</keyword>
<keyword id="KW-0699">rRNA-binding</keyword>
<dbReference type="EMBL" id="CP001102">
    <property type="protein sequence ID" value="ACE05628.1"/>
    <property type="molecule type" value="Genomic_DNA"/>
</dbReference>
<dbReference type="RefSeq" id="WP_012472393.1">
    <property type="nucleotide sequence ID" value="NC_010830.1"/>
</dbReference>
<dbReference type="SMR" id="B3EUK9"/>
<dbReference type="STRING" id="452471.Aasi_0183"/>
<dbReference type="KEGG" id="aas:Aasi_0183"/>
<dbReference type="eggNOG" id="COG0096">
    <property type="taxonomic scope" value="Bacteria"/>
</dbReference>
<dbReference type="HOGENOM" id="CLU_098428_0_2_10"/>
<dbReference type="Proteomes" id="UP000001227">
    <property type="component" value="Chromosome"/>
</dbReference>
<dbReference type="GO" id="GO:1990904">
    <property type="term" value="C:ribonucleoprotein complex"/>
    <property type="evidence" value="ECO:0007669"/>
    <property type="project" value="UniProtKB-KW"/>
</dbReference>
<dbReference type="GO" id="GO:0005840">
    <property type="term" value="C:ribosome"/>
    <property type="evidence" value="ECO:0007669"/>
    <property type="project" value="UniProtKB-KW"/>
</dbReference>
<dbReference type="GO" id="GO:0019843">
    <property type="term" value="F:rRNA binding"/>
    <property type="evidence" value="ECO:0007669"/>
    <property type="project" value="UniProtKB-UniRule"/>
</dbReference>
<dbReference type="GO" id="GO:0003735">
    <property type="term" value="F:structural constituent of ribosome"/>
    <property type="evidence" value="ECO:0007669"/>
    <property type="project" value="InterPro"/>
</dbReference>
<dbReference type="GO" id="GO:0006412">
    <property type="term" value="P:translation"/>
    <property type="evidence" value="ECO:0007669"/>
    <property type="project" value="UniProtKB-UniRule"/>
</dbReference>
<dbReference type="FunFam" id="3.30.1370.30:FF:000002">
    <property type="entry name" value="30S ribosomal protein S8"/>
    <property type="match status" value="1"/>
</dbReference>
<dbReference type="FunFam" id="3.30.1490.10:FF:000001">
    <property type="entry name" value="30S ribosomal protein S8"/>
    <property type="match status" value="1"/>
</dbReference>
<dbReference type="Gene3D" id="3.30.1370.30">
    <property type="match status" value="1"/>
</dbReference>
<dbReference type="Gene3D" id="3.30.1490.10">
    <property type="match status" value="1"/>
</dbReference>
<dbReference type="HAMAP" id="MF_01302_B">
    <property type="entry name" value="Ribosomal_uS8_B"/>
    <property type="match status" value="1"/>
</dbReference>
<dbReference type="InterPro" id="IPR000630">
    <property type="entry name" value="Ribosomal_uS8"/>
</dbReference>
<dbReference type="InterPro" id="IPR047863">
    <property type="entry name" value="Ribosomal_uS8_CS"/>
</dbReference>
<dbReference type="InterPro" id="IPR035987">
    <property type="entry name" value="Ribosomal_uS8_sf"/>
</dbReference>
<dbReference type="NCBIfam" id="NF001109">
    <property type="entry name" value="PRK00136.1"/>
    <property type="match status" value="1"/>
</dbReference>
<dbReference type="PANTHER" id="PTHR11758">
    <property type="entry name" value="40S RIBOSOMAL PROTEIN S15A"/>
    <property type="match status" value="1"/>
</dbReference>
<dbReference type="Pfam" id="PF00410">
    <property type="entry name" value="Ribosomal_S8"/>
    <property type="match status" value="1"/>
</dbReference>
<dbReference type="SUPFAM" id="SSF56047">
    <property type="entry name" value="Ribosomal protein S8"/>
    <property type="match status" value="1"/>
</dbReference>
<dbReference type="PROSITE" id="PS00053">
    <property type="entry name" value="RIBOSOMAL_S8"/>
    <property type="match status" value="1"/>
</dbReference>
<reference key="1">
    <citation type="journal article" date="2010" name="J. Bacteriol.">
        <title>The genome of the amoeba symbiont 'Candidatus Amoebophilus asiaticus' reveals common mechanisms for host cell interaction among amoeba-associated bacteria.</title>
        <authorList>
            <person name="Schmitz-Esser S."/>
            <person name="Tischler P."/>
            <person name="Arnold R."/>
            <person name="Montanaro J."/>
            <person name="Wagner M."/>
            <person name="Rattei T."/>
            <person name="Horn M."/>
        </authorList>
    </citation>
    <scope>NUCLEOTIDE SEQUENCE [LARGE SCALE GENOMIC DNA]</scope>
    <source>
        <strain>5a2</strain>
    </source>
</reference>
<gene>
    <name evidence="1" type="primary">rpsH</name>
    <name type="ordered locus">Aasi_0183</name>
</gene>
<comment type="function">
    <text evidence="1">One of the primary rRNA binding proteins, it binds directly to 16S rRNA central domain where it helps coordinate assembly of the platform of the 30S subunit.</text>
</comment>
<comment type="subunit">
    <text evidence="1">Part of the 30S ribosomal subunit. Contacts proteins S5 and S12.</text>
</comment>
<comment type="similarity">
    <text evidence="1">Belongs to the universal ribosomal protein uS8 family.</text>
</comment>
<sequence>MITDPIADYLTRIRNAIRARHRIVEIPASNLKKAMTELLHEKGYIKQYKFDDQPNKQGSIKIGLKYNPGTKTSPINKLERVSKPGLRKYVKASELPSVLNGLGIAILSTSKGIMSDKEARQMKLGGEVLCYIY</sequence>
<accession>B3EUK9</accession>
<name>RS8_AMOA5</name>
<evidence type="ECO:0000255" key="1">
    <source>
        <dbReference type="HAMAP-Rule" id="MF_01302"/>
    </source>
</evidence>
<evidence type="ECO:0000305" key="2"/>
<organism>
    <name type="scientific">Amoebophilus asiaticus (strain 5a2)</name>
    <dbReference type="NCBI Taxonomy" id="452471"/>
    <lineage>
        <taxon>Bacteria</taxon>
        <taxon>Pseudomonadati</taxon>
        <taxon>Bacteroidota</taxon>
        <taxon>Cytophagia</taxon>
        <taxon>Cytophagales</taxon>
        <taxon>Amoebophilaceae</taxon>
        <taxon>Candidatus Amoebophilus</taxon>
    </lineage>
</organism>
<proteinExistence type="inferred from homology"/>
<protein>
    <recommendedName>
        <fullName evidence="1">Small ribosomal subunit protein uS8</fullName>
    </recommendedName>
    <alternativeName>
        <fullName evidence="2">30S ribosomal protein S8</fullName>
    </alternativeName>
</protein>